<gene>
    <name type="primary">Dpf3</name>
    <name type="synonym">Baf45c</name>
    <name type="synonym">Cerd4</name>
</gene>
<sequence length="378" mass="43070">MATVIHNPLKALGDQFYKEAIEHCRSYNSRLCAERSVRLPFLDSQTGVAQNNCYIWMEKRHRGPGLAPGQLYTYPARCWRKKRRLHPPEDPKLRLLEIKPEVELPLKKDGFTSESTTLEALLRGEGVEKKVDAREEESIQEIQRVLENDENVEEGNEEEDLEEDVPKRKNRTRGRARGSAGGRRRHDAASQEDHDKPYVCDICGKRYKNRPGLSYHYAHTHLASEEGDEAQDQETRSPPNHRNENHRPQKGPDGTVIPNNYCDFCLGGSNMNKKSGRPEELVSCADCGRSGHPTCLQFTLNMTEAVKTYKWQCIECKSCILCGTSENDDQLLFCDDCDRGYHMYCLNPPVAEPPEGSWSCHLCWELLKEKASAFGCQA</sequence>
<protein>
    <recommendedName>
        <fullName>Zinc finger protein DPF3</fullName>
    </recommendedName>
    <alternativeName>
        <fullName>BRG1-associated factor 45C</fullName>
        <shortName>BAF45C</shortName>
    </alternativeName>
    <alternativeName>
        <fullName>Zinc finger protein cer-d4</fullName>
    </alternativeName>
</protein>
<comment type="function">
    <text evidence="1 6">Muscle-specific component of the BAF complex, a multiprotein complex involved in transcriptional activation and repression of select genes by chromatin remodeling (alteration of DNA-nucleosome topology). Specifically binds acetylated lysines on histone 3 and 4 (H3K14ac, H3K9ac, H4K5ac, H4K8ac, H4K12ac, H4K16ac). In the complex, it acts as a tissue-specific anchor between histone acetylations and methylations and chromatin remodeling. It thereby probably plays an essential role in heart and skeletal muscle development (By similarity). Belongs to the neuron-specific chromatin remodeling complex (nBAF complex). During neural development a switch from a stem/progenitor to a post-mitotic chromatin remodeling mechanism occurs as neurons exit the cell cycle and become committed to their adult state. The transition from proliferating neural stem/progenitor cells to post-mitotic neurons requires a switch in subunit composition of the npBAF and nBAF complexes. As neural progenitors exit mitosis and differentiate into neurons, npBAF complexes which contain ACTL6A/BAF53A and PHF10/BAF45A, are exchanged for homologous alternative ACTL6B/BAF53B and DPF1/BAF45B or DPF3/BAF45C subunits in neuron-specific complexes (nBAF). The npBAF complex is essential for the self-renewal/proliferative capacity of the multipotent neural stem cells. The nBAF complex along with CREST plays a role regulating the activity of genes essential for dendrite growth.</text>
</comment>
<comment type="function">
    <molecule>Isoform 2</molecule>
    <text evidence="8">Acts as a regulator of myogenesis in cooperation with HDGFL2 (PubMed:32459350). Mediates the interaction of HDGFL2 with the BAF complex (PubMed:32459350). HDGFL2-DPF3a activate myogenic genes by increasing chromatin accessibility through recruitment of SMARCA4/BRG1/BAF190A (ATPase subunit of the BAF complex) to myogenic gene promoters (PubMed:32459350).</text>
</comment>
<comment type="subunit">
    <text evidence="2 6">Component of the BAF complex, which includes at least actin (ACTB), ARID1A, ARID1B/BAF250, SMARCA2, SMARCA4/BRG1/BAF190A, ACTL6A/BAF53, ACTL6B/BAF53B, SMARCE1/BAF57, SMARCC1/BAF155, SMARCC2/BAF170, SMARCB1/SNF5/INI1, and one or more of SMARCD1/BAF60A, SMARCD2/BAF60B, or SMARCD3/BAF60C (By similarity). In muscle cells, the BAF complex also contains DPF3 (By similarity). Interacts with acetylated histones H3 and H4 (By similarity). Component of neuron-specific chromatin remodeling complex (nBAF complex) composed of at least, ARID1A/BAF250A or ARID1B/BAF250B, SMARCD1/BAF60A, SMARCD3/BAF60C, SMARCA2/BRM/BAF190B, SMARCA4/BRG1/BAF190A, SMARCB1/BAF47, SMARCC1/BAF155, SMARCE1/BAF57, SMARCC2/BAF170, DPF1/BAF45B, DPF3/BAF45C, ACTL6B/BAF53B and actin (PubMed:17640523).</text>
</comment>
<comment type="subunit">
    <molecule>Isoform 2</molecule>
    <text evidence="2 8">Interacts with HDGFL2 (PubMed:32459350). Interacts with SMARCA4/BRG1/BAF190A, SMARCC1/BAF155 and SMARCD1/BAF60A (By similarity).</text>
</comment>
<comment type="subcellular location">
    <subcellularLocation>
        <location evidence="2">Nucleus</location>
    </subcellularLocation>
</comment>
<comment type="alternative products">
    <event type="alternative splicing"/>
    <isoform>
        <id>P58269-1</id>
        <name>1</name>
        <name>DPF3b</name>
        <sequence type="displayed"/>
    </isoform>
    <isoform>
        <id>P58269-2</id>
        <name>2</name>
        <name>DPF3a</name>
        <sequence type="described" ref="VSP_035887"/>
    </isoform>
    <isoform>
        <id>P58269-3</id>
        <name>3</name>
        <sequence type="described" ref="VSP_035886 VSP_035887"/>
    </isoform>
    <isoform>
        <id>P58269-4</id>
        <name>4</name>
        <sequence type="described" ref="VSP_035885 VSP_035887"/>
    </isoform>
</comment>
<comment type="tissue specificity">
    <text evidence="6 7 9">Expressed in the heart and somites. Expressed in cerebellum and spinal cord, but not in cerebral cortex. Expressed specifically in post-mitotic neurons (at protein level).</text>
</comment>
<comment type="developmental stage">
    <text evidence="6 7">First expressed in the first differentiating cardiomyocytes of the cardiac crescent at 7.5 dpc and in the first somites at 8.0 dpc. In the heart, expression is restricted to the myocardial compartment. In the developing forebrain and cerebellar primordium, strictly expressed in post-mitotic neurons.</text>
</comment>
<comment type="domain">
    <text evidence="1">The PHD-type zinc fingers mediate the binding to acetylated histones.</text>
</comment>
<comment type="similarity">
    <text evidence="12">Belongs to the requiem/DPF family.</text>
</comment>
<evidence type="ECO:0000250" key="1"/>
<evidence type="ECO:0000250" key="2">
    <source>
        <dbReference type="UniProtKB" id="Q92784"/>
    </source>
</evidence>
<evidence type="ECO:0000255" key="3">
    <source>
        <dbReference type="PROSITE-ProRule" id="PRU00042"/>
    </source>
</evidence>
<evidence type="ECO:0000255" key="4">
    <source>
        <dbReference type="PROSITE-ProRule" id="PRU00146"/>
    </source>
</evidence>
<evidence type="ECO:0000256" key="5">
    <source>
        <dbReference type="SAM" id="MobiDB-lite"/>
    </source>
</evidence>
<evidence type="ECO:0000269" key="6">
    <source>
    </source>
</evidence>
<evidence type="ECO:0000269" key="7">
    <source>
    </source>
</evidence>
<evidence type="ECO:0000269" key="8">
    <source>
    </source>
</evidence>
<evidence type="ECO:0000269" key="9">
    <source>
    </source>
</evidence>
<evidence type="ECO:0000303" key="10">
    <source>
    </source>
</evidence>
<evidence type="ECO:0000303" key="11">
    <source>
    </source>
</evidence>
<evidence type="ECO:0000305" key="12"/>
<feature type="chain" id="PRO_0000168155" description="Zinc finger protein DPF3">
    <location>
        <begin position="1"/>
        <end position="378"/>
    </location>
</feature>
<feature type="zinc finger region" description="C2H2-type" evidence="3">
    <location>
        <begin position="198"/>
        <end position="221"/>
    </location>
</feature>
<feature type="zinc finger region" description="PHD-type 1" evidence="4">
    <location>
        <begin position="259"/>
        <end position="319"/>
    </location>
</feature>
<feature type="zinc finger region" description="PHD-type 2" evidence="4">
    <location>
        <begin position="316"/>
        <end position="366"/>
    </location>
</feature>
<feature type="region of interest" description="Disordered" evidence="5">
    <location>
        <begin position="146"/>
        <end position="193"/>
    </location>
</feature>
<feature type="region of interest" description="Disordered" evidence="5">
    <location>
        <begin position="225"/>
        <end position="254"/>
    </location>
</feature>
<feature type="compositionally biased region" description="Acidic residues" evidence="5">
    <location>
        <begin position="148"/>
        <end position="163"/>
    </location>
</feature>
<feature type="compositionally biased region" description="Basic residues" evidence="5">
    <location>
        <begin position="168"/>
        <end position="186"/>
    </location>
</feature>
<feature type="cross-link" description="Glycyl lysine isopeptide (Lys-Gly) (interchain with G-Cter in SUMO2)" evidence="2">
    <location>
        <position position="99"/>
    </location>
</feature>
<feature type="splice variant" id="VSP_035885" description="In isoform 4." evidence="11">
    <original>MATVIHNPLKALGDQFYKEAIEHCRSYNSRLCAERSVRLPFLDSQTGVAQNNCYI</original>
    <variation>MGCLPKGHNRPGA</variation>
    <location>
        <begin position="1"/>
        <end position="55"/>
    </location>
</feature>
<feature type="splice variant" id="VSP_035886" description="In isoform 3." evidence="12">
    <location>
        <position position="101"/>
    </location>
</feature>
<feature type="splice variant" id="VSP_035887" description="In isoform 2, isoform 3 and isoform 4." evidence="10 11">
    <original>GHPTCLQFTLNMTEAVKTYKWQCIECKSCILCGTSENDDQLLFCDDCDRGYHMYCLNPPVAEPPEGSWSCHLCWELLKEKASAFGCQA</original>
    <variation>AHLGGEGRKEKEAAAAARTTEDLFGSTSESDTSTFYGFDEDDLEEPRSCRGRRSGRGSPTADKKGSC</variation>
    <location>
        <begin position="291"/>
        <end position="378"/>
    </location>
</feature>
<feature type="region of interest" description="Interaction with HDGFL2" evidence="2">
    <location sequence="P58269-2">
        <begin position="317"/>
        <end position="332"/>
    </location>
</feature>
<feature type="modified residue" description="Phosphoserine" evidence="2">
    <location sequence="P58269-2">
        <position position="323"/>
    </location>
</feature>
<keyword id="KW-0010">Activator</keyword>
<keyword id="KW-0025">Alternative splicing</keyword>
<keyword id="KW-0156">Chromatin regulator</keyword>
<keyword id="KW-1017">Isopeptide bond</keyword>
<keyword id="KW-0479">Metal-binding</keyword>
<keyword id="KW-0517">Myogenesis</keyword>
<keyword id="KW-0524">Neurogenesis</keyword>
<keyword id="KW-0539">Nucleus</keyword>
<keyword id="KW-0597">Phosphoprotein</keyword>
<keyword id="KW-1185">Reference proteome</keyword>
<keyword id="KW-0677">Repeat</keyword>
<keyword id="KW-0678">Repressor</keyword>
<keyword id="KW-0804">Transcription</keyword>
<keyword id="KW-0805">Transcription regulation</keyword>
<keyword id="KW-0832">Ubl conjugation</keyword>
<keyword id="KW-0862">Zinc</keyword>
<keyword id="KW-0863">Zinc-finger</keyword>
<accession>P58269</accession>
<accession>Q80W78</accession>
<accession>Q8CAD8</accession>
<dbReference type="EMBL" id="AF362750">
    <property type="protein sequence ID" value="AAK54538.1"/>
    <property type="molecule type" value="mRNA"/>
</dbReference>
<dbReference type="EMBL" id="AK039011">
    <property type="protein sequence ID" value="BAC30204.1"/>
    <property type="molecule type" value="mRNA"/>
</dbReference>
<dbReference type="EMBL" id="BC048572">
    <property type="protein sequence ID" value="AAH48572.1"/>
    <property type="molecule type" value="mRNA"/>
</dbReference>
<dbReference type="CCDS" id="CCDS56846.1">
    <molecule id="P58269-3"/>
</dbReference>
<dbReference type="CCDS" id="CCDS59574.1">
    <molecule id="P58269-1"/>
</dbReference>
<dbReference type="RefSeq" id="NP_001254554.1">
    <molecule id="P58269-1"/>
    <property type="nucleotide sequence ID" value="NM_001267625.1"/>
</dbReference>
<dbReference type="RefSeq" id="NP_001254555.1">
    <molecule id="P58269-2"/>
    <property type="nucleotide sequence ID" value="NM_001267626.2"/>
</dbReference>
<dbReference type="RefSeq" id="NP_478119.1">
    <molecule id="P58269-3"/>
    <property type="nucleotide sequence ID" value="NM_058212.3"/>
</dbReference>
<dbReference type="BMRB" id="P58269"/>
<dbReference type="SMR" id="P58269"/>
<dbReference type="ComplexPortal" id="CPX-1240">
    <property type="entry name" value="Muscle cell-specific SWI/SNF ATP-dependent chromatin remodeling complex, ACTL6A-ARID1A-SMARCA2 variant"/>
</dbReference>
<dbReference type="ComplexPortal" id="CPX-1241">
    <property type="entry name" value="Muscle cell-specific SWI/SNF ATP-dependent chromatin remodeling complex, ACTL6A-ARID1A-SMARCA4 variant"/>
</dbReference>
<dbReference type="ComplexPortal" id="CPX-1242">
    <property type="entry name" value="Muscle cell-specific SWI/SNF ATP-dependent chromatin remodeling complex, ACTL6A-ARID1B-SMARCA2 variant"/>
</dbReference>
<dbReference type="ComplexPortal" id="CPX-1243">
    <property type="entry name" value="Muscle cell-specific SWI/SNF ATP-dependent chromatin remodeling complex, ACTL6A-ARID1B-SMARCA4 variant"/>
</dbReference>
<dbReference type="ComplexPortal" id="CPX-1244">
    <property type="entry name" value="Muscle cell-specific SWI/SNF ATP-dependent chromatin remodeling complex, ACTL6B-ARID1A-SMARCA2 variant"/>
</dbReference>
<dbReference type="ComplexPortal" id="CPX-1245">
    <property type="entry name" value="Muscle cell-specific SWI/SNF ATP-dependent chromatin remodeling complex, ACTL6B-ARID1A-SMARCA4 variant"/>
</dbReference>
<dbReference type="ComplexPortal" id="CPX-1246">
    <property type="entry name" value="Muscle cell-specific SWI/SNF ATP-dependent chromatin remodeling complex, ACTL6B-ARID1B-SMARCA2 variant"/>
</dbReference>
<dbReference type="ComplexPortal" id="CPX-1247">
    <property type="entry name" value="Muscle cell-specific SWI/SNF ATP-dependent chromatin remodeling complex, ACTL6B-ARID1B-SMARCA4 variant"/>
</dbReference>
<dbReference type="ComplexPortal" id="CPX-1256">
    <property type="entry name" value="Neuron-specific SWI/SNF ATP-dependent chromatin remodeling complex, ARID1A-SMARCA2 variant"/>
</dbReference>
<dbReference type="ComplexPortal" id="CPX-1257">
    <property type="entry name" value="Neuron-specific SWI/SNF ATP-dependent chromatin remodeling complex, ARID1A-SMARCA4 variant"/>
</dbReference>
<dbReference type="ComplexPortal" id="CPX-1258">
    <property type="entry name" value="Neuron-specific SWI/SNF ATP-dependent chromatin remodeling complex, ARID1B-SMARCA2 variant"/>
</dbReference>
<dbReference type="ComplexPortal" id="CPX-1259">
    <property type="entry name" value="Neuron-specific SWI/SNF ATP-dependent chromatin remodeling complex, ARID1B-SMARCA4 variant"/>
</dbReference>
<dbReference type="FunCoup" id="P58269">
    <property type="interactions" value="711"/>
</dbReference>
<dbReference type="STRING" id="10090.ENSMUSP00000136280"/>
<dbReference type="iPTMnet" id="P58269"/>
<dbReference type="PhosphoSitePlus" id="P58269"/>
<dbReference type="jPOST" id="P58269"/>
<dbReference type="PaxDb" id="10090-ENSMUSP00000136280"/>
<dbReference type="PeptideAtlas" id="P58269"/>
<dbReference type="ProteomicsDB" id="277377">
    <molecule id="P58269-1"/>
</dbReference>
<dbReference type="ProteomicsDB" id="277378">
    <molecule id="P58269-2"/>
</dbReference>
<dbReference type="ProteomicsDB" id="277379">
    <molecule id="P58269-3"/>
</dbReference>
<dbReference type="ProteomicsDB" id="277380">
    <molecule id="P58269-4"/>
</dbReference>
<dbReference type="Antibodypedia" id="25263">
    <property type="antibodies" value="129 antibodies from 24 providers"/>
</dbReference>
<dbReference type="DNASU" id="70127"/>
<dbReference type="Ensembl" id="ENSMUST00000177959.8">
    <molecule id="P58269-3"/>
    <property type="protein sequence ID" value="ENSMUSP00000137477.2"/>
    <property type="gene ID" value="ENSMUSG00000021221.17"/>
</dbReference>
<dbReference type="Ensembl" id="ENSMUST00000178756.8">
    <molecule id="P58269-1"/>
    <property type="protein sequence ID" value="ENSMUSP00000136280.2"/>
    <property type="gene ID" value="ENSMUSG00000021221.17"/>
</dbReference>
<dbReference type="GeneID" id="70127"/>
<dbReference type="KEGG" id="mmu:70127"/>
<dbReference type="UCSC" id="uc007odc.2">
    <molecule id="P58269-1"/>
    <property type="organism name" value="mouse"/>
</dbReference>
<dbReference type="UCSC" id="uc007odd.2">
    <molecule id="P58269-3"/>
    <property type="organism name" value="mouse"/>
</dbReference>
<dbReference type="AGR" id="MGI:1917377"/>
<dbReference type="CTD" id="8110"/>
<dbReference type="MGI" id="MGI:1917377">
    <property type="gene designation" value="Dpf3"/>
</dbReference>
<dbReference type="VEuPathDB" id="HostDB:ENSMUSG00000021221"/>
<dbReference type="eggNOG" id="KOG1244">
    <property type="taxonomic scope" value="Eukaryota"/>
</dbReference>
<dbReference type="GeneTree" id="ENSGT00940000159153"/>
<dbReference type="HOGENOM" id="CLU_038980_0_1_1"/>
<dbReference type="InParanoid" id="P58269"/>
<dbReference type="OMA" id="CLQFTIN"/>
<dbReference type="OrthoDB" id="1903104at2759"/>
<dbReference type="PhylomeDB" id="P58269"/>
<dbReference type="TreeFam" id="TF318971"/>
<dbReference type="BioGRID-ORCS" id="70127">
    <property type="hits" value="1 hit in 83 CRISPR screens"/>
</dbReference>
<dbReference type="ChiTaRS" id="Dpf3">
    <property type="organism name" value="mouse"/>
</dbReference>
<dbReference type="PRO" id="PR:P58269"/>
<dbReference type="Proteomes" id="UP000000589">
    <property type="component" value="Chromosome 12"/>
</dbReference>
<dbReference type="RNAct" id="P58269">
    <property type="molecule type" value="protein"/>
</dbReference>
<dbReference type="Bgee" id="ENSMUSG00000021221">
    <property type="expression patterns" value="Expressed in retinal neural layer and 125 other cell types or tissues"/>
</dbReference>
<dbReference type="ExpressionAtlas" id="P58269">
    <property type="expression patterns" value="baseline and differential"/>
</dbReference>
<dbReference type="GO" id="GO:0035060">
    <property type="term" value="C:brahma complex"/>
    <property type="evidence" value="ECO:0000303"/>
    <property type="project" value="ComplexPortal"/>
</dbReference>
<dbReference type="GO" id="GO:0000785">
    <property type="term" value="C:chromatin"/>
    <property type="evidence" value="ECO:0000303"/>
    <property type="project" value="ComplexPortal"/>
</dbReference>
<dbReference type="GO" id="GO:0071565">
    <property type="term" value="C:nBAF complex"/>
    <property type="evidence" value="ECO:0000314"/>
    <property type="project" value="UniProtKB"/>
</dbReference>
<dbReference type="GO" id="GO:0005654">
    <property type="term" value="C:nucleoplasm"/>
    <property type="evidence" value="ECO:0000304"/>
    <property type="project" value="Reactome"/>
</dbReference>
<dbReference type="GO" id="GO:0016514">
    <property type="term" value="C:SWI/SNF complex"/>
    <property type="evidence" value="ECO:0000303"/>
    <property type="project" value="ComplexPortal"/>
</dbReference>
<dbReference type="GO" id="GO:0008270">
    <property type="term" value="F:zinc ion binding"/>
    <property type="evidence" value="ECO:0007669"/>
    <property type="project" value="UniProtKB-KW"/>
</dbReference>
<dbReference type="GO" id="GO:0006338">
    <property type="term" value="P:chromatin remodeling"/>
    <property type="evidence" value="ECO:0000303"/>
    <property type="project" value="ComplexPortal"/>
</dbReference>
<dbReference type="GO" id="GO:0042692">
    <property type="term" value="P:muscle cell differentiation"/>
    <property type="evidence" value="ECO:0000315"/>
    <property type="project" value="UniProtKB"/>
</dbReference>
<dbReference type="GO" id="GO:0007517">
    <property type="term" value="P:muscle organ development"/>
    <property type="evidence" value="ECO:0007669"/>
    <property type="project" value="UniProtKB-KW"/>
</dbReference>
<dbReference type="GO" id="GO:0007399">
    <property type="term" value="P:nervous system development"/>
    <property type="evidence" value="ECO:0000315"/>
    <property type="project" value="UniProtKB"/>
</dbReference>
<dbReference type="GO" id="GO:0045597">
    <property type="term" value="P:positive regulation of cell differentiation"/>
    <property type="evidence" value="ECO:0000303"/>
    <property type="project" value="ComplexPortal"/>
</dbReference>
<dbReference type="GO" id="GO:2000781">
    <property type="term" value="P:positive regulation of double-strand break repair"/>
    <property type="evidence" value="ECO:0000303"/>
    <property type="project" value="ComplexPortal"/>
</dbReference>
<dbReference type="GO" id="GO:0045663">
    <property type="term" value="P:positive regulation of myoblast differentiation"/>
    <property type="evidence" value="ECO:0000303"/>
    <property type="project" value="ComplexPortal"/>
</dbReference>
<dbReference type="GO" id="GO:0070316">
    <property type="term" value="P:regulation of G0 to G1 transition"/>
    <property type="evidence" value="ECO:0000303"/>
    <property type="project" value="ComplexPortal"/>
</dbReference>
<dbReference type="GO" id="GO:2000045">
    <property type="term" value="P:regulation of G1/S transition of mitotic cell cycle"/>
    <property type="evidence" value="ECO:0000303"/>
    <property type="project" value="ComplexPortal"/>
</dbReference>
<dbReference type="GO" id="GO:0030071">
    <property type="term" value="P:regulation of mitotic metaphase/anaphase transition"/>
    <property type="evidence" value="ECO:0000303"/>
    <property type="project" value="ComplexPortal"/>
</dbReference>
<dbReference type="GO" id="GO:2000819">
    <property type="term" value="P:regulation of nucleotide-excision repair"/>
    <property type="evidence" value="ECO:0000303"/>
    <property type="project" value="ComplexPortal"/>
</dbReference>
<dbReference type="GO" id="GO:0006357">
    <property type="term" value="P:regulation of transcription by RNA polymerase II"/>
    <property type="evidence" value="ECO:0000303"/>
    <property type="project" value="ComplexPortal"/>
</dbReference>
<dbReference type="CDD" id="cd15692">
    <property type="entry name" value="PHD1_DPF3"/>
    <property type="match status" value="1"/>
</dbReference>
<dbReference type="CDD" id="cd15530">
    <property type="entry name" value="PHD2_d4"/>
    <property type="match status" value="1"/>
</dbReference>
<dbReference type="FunFam" id="3.30.40.10:FF:000005">
    <property type="entry name" value="zinc finger protein isoform X1"/>
    <property type="match status" value="1"/>
</dbReference>
<dbReference type="Gene3D" id="3.30.160.60">
    <property type="entry name" value="Classic Zinc Finger"/>
    <property type="match status" value="1"/>
</dbReference>
<dbReference type="Gene3D" id="3.30.40.10">
    <property type="entry name" value="Zinc/RING finger domain, C3HC4 (zinc finger)"/>
    <property type="match status" value="1"/>
</dbReference>
<dbReference type="InterPro" id="IPR025750">
    <property type="entry name" value="DPF1-3_N"/>
</dbReference>
<dbReference type="InterPro" id="IPR036236">
    <property type="entry name" value="Znf_C2H2_sf"/>
</dbReference>
<dbReference type="InterPro" id="IPR013087">
    <property type="entry name" value="Znf_C2H2_type"/>
</dbReference>
<dbReference type="InterPro" id="IPR011011">
    <property type="entry name" value="Znf_FYVE_PHD"/>
</dbReference>
<dbReference type="InterPro" id="IPR001965">
    <property type="entry name" value="Znf_PHD"/>
</dbReference>
<dbReference type="InterPro" id="IPR019787">
    <property type="entry name" value="Znf_PHD-finger"/>
</dbReference>
<dbReference type="InterPro" id="IPR013083">
    <property type="entry name" value="Znf_RING/FYVE/PHD"/>
</dbReference>
<dbReference type="PANTHER" id="PTHR45888">
    <property type="entry name" value="HL01030P-RELATED"/>
    <property type="match status" value="1"/>
</dbReference>
<dbReference type="PANTHER" id="PTHR45888:SF10">
    <property type="entry name" value="ZINC FINGER PROTEIN DPF3"/>
    <property type="match status" value="1"/>
</dbReference>
<dbReference type="Pfam" id="PF14051">
    <property type="entry name" value="DPF1-3_N"/>
    <property type="match status" value="1"/>
</dbReference>
<dbReference type="Pfam" id="PF00628">
    <property type="entry name" value="PHD"/>
    <property type="match status" value="2"/>
</dbReference>
<dbReference type="SMART" id="SM00249">
    <property type="entry name" value="PHD"/>
    <property type="match status" value="2"/>
</dbReference>
<dbReference type="SMART" id="SM00355">
    <property type="entry name" value="ZnF_C2H2"/>
    <property type="match status" value="1"/>
</dbReference>
<dbReference type="SUPFAM" id="SSF57667">
    <property type="entry name" value="beta-beta-alpha zinc fingers"/>
    <property type="match status" value="1"/>
</dbReference>
<dbReference type="SUPFAM" id="SSF57903">
    <property type="entry name" value="FYVE/PHD zinc finger"/>
    <property type="match status" value="2"/>
</dbReference>
<dbReference type="PROSITE" id="PS01359">
    <property type="entry name" value="ZF_PHD_1"/>
    <property type="match status" value="1"/>
</dbReference>
<dbReference type="PROSITE" id="PS50016">
    <property type="entry name" value="ZF_PHD_2"/>
    <property type="match status" value="2"/>
</dbReference>
<dbReference type="PROSITE" id="PS00028">
    <property type="entry name" value="ZINC_FINGER_C2H2_1"/>
    <property type="match status" value="1"/>
</dbReference>
<dbReference type="PROSITE" id="PS50157">
    <property type="entry name" value="ZINC_FINGER_C2H2_2"/>
    <property type="match status" value="1"/>
</dbReference>
<proteinExistence type="evidence at protein level"/>
<reference key="1">
    <citation type="journal article" date="2001" name="Mamm. Genome">
        <title>Cerd4, third member of the d4 gene family: expression and organization of genomic locus.</title>
        <authorList>
            <person name="Ninkina N.N."/>
            <person name="Mertsalov I.B."/>
            <person name="Kulikova D.A."/>
            <person name="Alimova-Kost M.V."/>
            <person name="Simonova O.B."/>
            <person name="Korochkin L.I."/>
            <person name="Kiselev S.L."/>
            <person name="Buchman V.L."/>
        </authorList>
    </citation>
    <scope>NUCLEOTIDE SEQUENCE [MRNA] (ISOFORM 2)</scope>
    <source>
        <strain>CD-1</strain>
        <tissue>Trigeminal ganglion</tissue>
    </source>
</reference>
<reference key="2">
    <citation type="journal article" date="2005" name="Science">
        <title>The transcriptional landscape of the mammalian genome.</title>
        <authorList>
            <person name="Carninci P."/>
            <person name="Kasukawa T."/>
            <person name="Katayama S."/>
            <person name="Gough J."/>
            <person name="Frith M.C."/>
            <person name="Maeda N."/>
            <person name="Oyama R."/>
            <person name="Ravasi T."/>
            <person name="Lenhard B."/>
            <person name="Wells C."/>
            <person name="Kodzius R."/>
            <person name="Shimokawa K."/>
            <person name="Bajic V.B."/>
            <person name="Brenner S.E."/>
            <person name="Batalov S."/>
            <person name="Forrest A.R."/>
            <person name="Zavolan M."/>
            <person name="Davis M.J."/>
            <person name="Wilming L.G."/>
            <person name="Aidinis V."/>
            <person name="Allen J.E."/>
            <person name="Ambesi-Impiombato A."/>
            <person name="Apweiler R."/>
            <person name="Aturaliya R.N."/>
            <person name="Bailey T.L."/>
            <person name="Bansal M."/>
            <person name="Baxter L."/>
            <person name="Beisel K.W."/>
            <person name="Bersano T."/>
            <person name="Bono H."/>
            <person name="Chalk A.M."/>
            <person name="Chiu K.P."/>
            <person name="Choudhary V."/>
            <person name="Christoffels A."/>
            <person name="Clutterbuck D.R."/>
            <person name="Crowe M.L."/>
            <person name="Dalla E."/>
            <person name="Dalrymple B.P."/>
            <person name="de Bono B."/>
            <person name="Della Gatta G."/>
            <person name="di Bernardo D."/>
            <person name="Down T."/>
            <person name="Engstrom P."/>
            <person name="Fagiolini M."/>
            <person name="Faulkner G."/>
            <person name="Fletcher C.F."/>
            <person name="Fukushima T."/>
            <person name="Furuno M."/>
            <person name="Futaki S."/>
            <person name="Gariboldi M."/>
            <person name="Georgii-Hemming P."/>
            <person name="Gingeras T.R."/>
            <person name="Gojobori T."/>
            <person name="Green R.E."/>
            <person name="Gustincich S."/>
            <person name="Harbers M."/>
            <person name="Hayashi Y."/>
            <person name="Hensch T.K."/>
            <person name="Hirokawa N."/>
            <person name="Hill D."/>
            <person name="Huminiecki L."/>
            <person name="Iacono M."/>
            <person name="Ikeo K."/>
            <person name="Iwama A."/>
            <person name="Ishikawa T."/>
            <person name="Jakt M."/>
            <person name="Kanapin A."/>
            <person name="Katoh M."/>
            <person name="Kawasawa Y."/>
            <person name="Kelso J."/>
            <person name="Kitamura H."/>
            <person name="Kitano H."/>
            <person name="Kollias G."/>
            <person name="Krishnan S.P."/>
            <person name="Kruger A."/>
            <person name="Kummerfeld S.K."/>
            <person name="Kurochkin I.V."/>
            <person name="Lareau L.F."/>
            <person name="Lazarevic D."/>
            <person name="Lipovich L."/>
            <person name="Liu J."/>
            <person name="Liuni S."/>
            <person name="McWilliam S."/>
            <person name="Madan Babu M."/>
            <person name="Madera M."/>
            <person name="Marchionni L."/>
            <person name="Matsuda H."/>
            <person name="Matsuzawa S."/>
            <person name="Miki H."/>
            <person name="Mignone F."/>
            <person name="Miyake S."/>
            <person name="Morris K."/>
            <person name="Mottagui-Tabar S."/>
            <person name="Mulder N."/>
            <person name="Nakano N."/>
            <person name="Nakauchi H."/>
            <person name="Ng P."/>
            <person name="Nilsson R."/>
            <person name="Nishiguchi S."/>
            <person name="Nishikawa S."/>
            <person name="Nori F."/>
            <person name="Ohara O."/>
            <person name="Okazaki Y."/>
            <person name="Orlando V."/>
            <person name="Pang K.C."/>
            <person name="Pavan W.J."/>
            <person name="Pavesi G."/>
            <person name="Pesole G."/>
            <person name="Petrovsky N."/>
            <person name="Piazza S."/>
            <person name="Reed J."/>
            <person name="Reid J.F."/>
            <person name="Ring B.Z."/>
            <person name="Ringwald M."/>
            <person name="Rost B."/>
            <person name="Ruan Y."/>
            <person name="Salzberg S.L."/>
            <person name="Sandelin A."/>
            <person name="Schneider C."/>
            <person name="Schoenbach C."/>
            <person name="Sekiguchi K."/>
            <person name="Semple C.A."/>
            <person name="Seno S."/>
            <person name="Sessa L."/>
            <person name="Sheng Y."/>
            <person name="Shibata Y."/>
            <person name="Shimada H."/>
            <person name="Shimada K."/>
            <person name="Silva D."/>
            <person name="Sinclair B."/>
            <person name="Sperling S."/>
            <person name="Stupka E."/>
            <person name="Sugiura K."/>
            <person name="Sultana R."/>
            <person name="Takenaka Y."/>
            <person name="Taki K."/>
            <person name="Tammoja K."/>
            <person name="Tan S.L."/>
            <person name="Tang S."/>
            <person name="Taylor M.S."/>
            <person name="Tegner J."/>
            <person name="Teichmann S.A."/>
            <person name="Ueda H.R."/>
            <person name="van Nimwegen E."/>
            <person name="Verardo R."/>
            <person name="Wei C.L."/>
            <person name="Yagi K."/>
            <person name="Yamanishi H."/>
            <person name="Zabarovsky E."/>
            <person name="Zhu S."/>
            <person name="Zimmer A."/>
            <person name="Hide W."/>
            <person name="Bult C."/>
            <person name="Grimmond S.M."/>
            <person name="Teasdale R.D."/>
            <person name="Liu E.T."/>
            <person name="Brusic V."/>
            <person name="Quackenbush J."/>
            <person name="Wahlestedt C."/>
            <person name="Mattick J.S."/>
            <person name="Hume D.A."/>
            <person name="Kai C."/>
            <person name="Sasaki D."/>
            <person name="Tomaru Y."/>
            <person name="Fukuda S."/>
            <person name="Kanamori-Katayama M."/>
            <person name="Suzuki M."/>
            <person name="Aoki J."/>
            <person name="Arakawa T."/>
            <person name="Iida J."/>
            <person name="Imamura K."/>
            <person name="Itoh M."/>
            <person name="Kato T."/>
            <person name="Kawaji H."/>
            <person name="Kawagashira N."/>
            <person name="Kawashima T."/>
            <person name="Kojima M."/>
            <person name="Kondo S."/>
            <person name="Konno H."/>
            <person name="Nakano K."/>
            <person name="Ninomiya N."/>
            <person name="Nishio T."/>
            <person name="Okada M."/>
            <person name="Plessy C."/>
            <person name="Shibata K."/>
            <person name="Shiraki T."/>
            <person name="Suzuki S."/>
            <person name="Tagami M."/>
            <person name="Waki K."/>
            <person name="Watahiki A."/>
            <person name="Okamura-Oho Y."/>
            <person name="Suzuki H."/>
            <person name="Kawai J."/>
            <person name="Hayashizaki Y."/>
        </authorList>
    </citation>
    <scope>NUCLEOTIDE SEQUENCE [LARGE SCALE MRNA] (ISOFORM 1)</scope>
    <source>
        <strain>C57BL/6J</strain>
        <tissue>Hypothalamus</tissue>
    </source>
</reference>
<reference key="3">
    <citation type="journal article" date="2004" name="Genome Res.">
        <title>The status, quality, and expansion of the NIH full-length cDNA project: the Mammalian Gene Collection (MGC).</title>
        <authorList>
            <consortium name="The MGC Project Team"/>
        </authorList>
    </citation>
    <scope>NUCLEOTIDE SEQUENCE [LARGE SCALE MRNA] (ISOFORM 4)</scope>
    <source>
        <tissue>Testis</tissue>
    </source>
</reference>
<reference key="4">
    <citation type="journal article" date="1996" name="Genomics">
        <title>The d4 gene family in the human genome.</title>
        <authorList>
            <person name="Chestkov A.V."/>
            <person name="Baka I.D."/>
            <person name="Kost M.V."/>
            <person name="Georgiev G.P."/>
            <person name="Buchman V.L."/>
        </authorList>
    </citation>
    <scope>TISSUE SPECIFICITY</scope>
</reference>
<reference key="5">
    <citation type="journal article" date="2007" name="Neuron">
        <title>An essential switch in subunit composition of a chromatin remodeling complex during neural development.</title>
        <authorList>
            <person name="Lessard J."/>
            <person name="Wu J.I."/>
            <person name="Ranish J.A."/>
            <person name="Wan M."/>
            <person name="Winslow M.M."/>
            <person name="Staahl B.T."/>
            <person name="Wu H."/>
            <person name="Aebersold R."/>
            <person name="Graef I.A."/>
            <person name="Crabtree G.R."/>
        </authorList>
    </citation>
    <scope>FUNCTION OF THE NBAF AND NPBAF COMPLEXES</scope>
    <scope>IDENTIFICATION BY MASS SPECTROMETRY</scope>
    <scope>IDENTIFICATION IN THE NBAF COMPLEX</scope>
    <scope>TISSUE SPECIFICITY</scope>
    <scope>DEVELOPMENTAL STAGE</scope>
</reference>
<reference key="6">
    <citation type="journal article" date="2008" name="Genes Dev.">
        <title>Regulation of muscle development by DPF3, a novel histone acetylation and methylation reader of the BAF chromatin remodeling complex.</title>
        <authorList>
            <person name="Lange M."/>
            <person name="Kaynak B."/>
            <person name="Forster U.B."/>
            <person name="Toenjes M."/>
            <person name="Fischer J.J."/>
            <person name="Grimm C."/>
            <person name="Schlesinger J."/>
            <person name="Just S."/>
            <person name="Dunkel I."/>
            <person name="Krueger T."/>
            <person name="Mebus S."/>
            <person name="Lehrach H."/>
            <person name="Lurz R."/>
            <person name="Gobom J."/>
            <person name="Rottbauer W."/>
            <person name="Abdelilah-Seyfried S."/>
            <person name="Sperling S."/>
        </authorList>
    </citation>
    <scope>TISSUE SPECIFICITY</scope>
    <scope>DEVELOPMENTAL STAGE</scope>
</reference>
<reference key="7">
    <citation type="journal article" date="2020" name="Nucleic Acids Res.">
        <title>HRP2-DPF3a-BAF complex coordinates histone modification and chromatin remodeling to regulate myogenic gene transcription.</title>
        <authorList>
            <person name="Zhu X."/>
            <person name="Lan B."/>
            <person name="Yi X."/>
            <person name="He C."/>
            <person name="Dang L."/>
            <person name="Zhou X."/>
            <person name="Lu Y."/>
            <person name="Sun Y."/>
            <person name="Liu Z."/>
            <person name="Bai X."/>
            <person name="Zhang K."/>
            <person name="Li B."/>
            <person name="Li M.J."/>
            <person name="Chen Y."/>
            <person name="Zhang L."/>
        </authorList>
    </citation>
    <scope>FUNCTION (ISOFORM 2)</scope>
    <scope>INTERACTION WITH HDGFL2 (ISOFORM 2)</scope>
</reference>
<organism>
    <name type="scientific">Mus musculus</name>
    <name type="common">Mouse</name>
    <dbReference type="NCBI Taxonomy" id="10090"/>
    <lineage>
        <taxon>Eukaryota</taxon>
        <taxon>Metazoa</taxon>
        <taxon>Chordata</taxon>
        <taxon>Craniata</taxon>
        <taxon>Vertebrata</taxon>
        <taxon>Euteleostomi</taxon>
        <taxon>Mammalia</taxon>
        <taxon>Eutheria</taxon>
        <taxon>Euarchontoglires</taxon>
        <taxon>Glires</taxon>
        <taxon>Rodentia</taxon>
        <taxon>Myomorpha</taxon>
        <taxon>Muroidea</taxon>
        <taxon>Muridae</taxon>
        <taxon>Murinae</taxon>
        <taxon>Mus</taxon>
        <taxon>Mus</taxon>
    </lineage>
</organism>
<name>DPF3_MOUSE</name>